<comment type="function">
    <text evidence="1">Calcium-binding peroxygenase involved in the degradation of storage lipid in oil bodies. May be involved in the interaction between oil bodies and vacuoles during seed germination and in the oxylipin signaling pathways and plant defense responses. Can catalyze sulfoxidation of thiobenzamide, hydroxylation of aniline and epoxidation of oleic acid (By similarity).</text>
</comment>
<comment type="catalytic activity">
    <reaction>
        <text>RH + ROOH = ROH + ROH.</text>
        <dbReference type="EC" id="1.11.2.3"/>
    </reaction>
</comment>
<comment type="cofactor">
    <cofactor evidence="1">
        <name>heme b</name>
        <dbReference type="ChEBI" id="CHEBI:60344"/>
    </cofactor>
    <text evidence="1">Binds 1 heme b (iron(II)-protoporphyrin IX) group.</text>
</comment>
<comment type="cofactor">
    <cofactor evidence="1">
        <name>Ca(2+)</name>
        <dbReference type="ChEBI" id="CHEBI:29108"/>
    </cofactor>
</comment>
<comment type="subunit">
    <text evidence="1">Homodimer.</text>
</comment>
<comment type="subcellular location">
    <subcellularLocation>
        <location>Microsome membrane</location>
    </subcellularLocation>
    <subcellularLocation>
        <location evidence="1">Lipid droplet</location>
    </subcellularLocation>
</comment>
<comment type="domain">
    <text>Transmembrane regions are predicted by sequence analysis tools, but these regions probably constitute hydrophobic domains associated to phospholipids.</text>
</comment>
<comment type="domain">
    <text>The proline-knot motif (120-129) may be involved in targeting to lipid bodies.</text>
</comment>
<comment type="similarity">
    <text evidence="4">Belongs to the caleosin family.</text>
</comment>
<gene>
    <name type="primary">PXG</name>
    <name type="ordered locus">Os04g0511200</name>
    <name type="ordered locus">LOC_Os04g43200</name>
    <name type="ORF">OsJ_15434</name>
    <name type="ORF">OSJNBa0004N05.7</name>
</gene>
<dbReference type="EC" id="1.11.2.3"/>
<dbReference type="EMBL" id="AL606622">
    <property type="protein sequence ID" value="CAE03383.1"/>
    <property type="molecule type" value="Genomic_DNA"/>
</dbReference>
<dbReference type="EMBL" id="AP008210">
    <property type="protein sequence ID" value="BAF15205.1"/>
    <property type="molecule type" value="Genomic_DNA"/>
</dbReference>
<dbReference type="EMBL" id="AP014960">
    <property type="protein sequence ID" value="BAS90039.1"/>
    <property type="molecule type" value="Genomic_DNA"/>
</dbReference>
<dbReference type="EMBL" id="CM000141">
    <property type="protein sequence ID" value="EAZ31318.1"/>
    <property type="molecule type" value="Genomic_DNA"/>
</dbReference>
<dbReference type="EMBL" id="AK243204">
    <property type="protein sequence ID" value="BAH01485.1"/>
    <property type="molecule type" value="mRNA"/>
</dbReference>
<dbReference type="RefSeq" id="XP_015633789.1">
    <property type="nucleotide sequence ID" value="XM_015778303.1"/>
</dbReference>
<dbReference type="FunCoup" id="Q7FAX1">
    <property type="interactions" value="2"/>
</dbReference>
<dbReference type="STRING" id="39947.Q7FAX1"/>
<dbReference type="PaxDb" id="39947-Q7FAX1"/>
<dbReference type="EnsemblPlants" id="Os04t0511200-01">
    <property type="protein sequence ID" value="Os04t0511200-01"/>
    <property type="gene ID" value="Os04g0511200"/>
</dbReference>
<dbReference type="Gramene" id="Os04t0511200-01">
    <property type="protein sequence ID" value="Os04t0511200-01"/>
    <property type="gene ID" value="Os04g0511200"/>
</dbReference>
<dbReference type="KEGG" id="dosa:Os04g0511200"/>
<dbReference type="eggNOG" id="ENOG502QQD0">
    <property type="taxonomic scope" value="Eukaryota"/>
</dbReference>
<dbReference type="HOGENOM" id="CLU_062049_0_1_1"/>
<dbReference type="InParanoid" id="Q7FAX1"/>
<dbReference type="OMA" id="FEFCEKS"/>
<dbReference type="OrthoDB" id="640742at2759"/>
<dbReference type="Proteomes" id="UP000000763">
    <property type="component" value="Chromosome 4"/>
</dbReference>
<dbReference type="Proteomes" id="UP000007752">
    <property type="component" value="Chromosome 4"/>
</dbReference>
<dbReference type="Proteomes" id="UP000059680">
    <property type="component" value="Chromosome 4"/>
</dbReference>
<dbReference type="GO" id="GO:0005783">
    <property type="term" value="C:endoplasmic reticulum"/>
    <property type="evidence" value="ECO:0007669"/>
    <property type="project" value="UniProtKB-KW"/>
</dbReference>
<dbReference type="GO" id="GO:0005811">
    <property type="term" value="C:lipid droplet"/>
    <property type="evidence" value="ECO:0007669"/>
    <property type="project" value="UniProtKB-SubCell"/>
</dbReference>
<dbReference type="GO" id="GO:0016020">
    <property type="term" value="C:membrane"/>
    <property type="evidence" value="ECO:0007669"/>
    <property type="project" value="UniProtKB-KW"/>
</dbReference>
<dbReference type="GO" id="GO:0005509">
    <property type="term" value="F:calcium ion binding"/>
    <property type="evidence" value="ECO:0000318"/>
    <property type="project" value="GO_Central"/>
</dbReference>
<dbReference type="GO" id="GO:0004497">
    <property type="term" value="F:monooxygenase activity"/>
    <property type="evidence" value="ECO:0000318"/>
    <property type="project" value="GO_Central"/>
</dbReference>
<dbReference type="GO" id="GO:1990137">
    <property type="term" value="F:plant seed peroxygenase activity"/>
    <property type="evidence" value="ECO:0007669"/>
    <property type="project" value="UniProtKB-EC"/>
</dbReference>
<dbReference type="InterPro" id="IPR007736">
    <property type="entry name" value="Caleosin-related"/>
</dbReference>
<dbReference type="PANTHER" id="PTHR31495:SF20">
    <property type="entry name" value="CALEOSIN-RELATED FAMILY PROTEIN"/>
    <property type="match status" value="1"/>
</dbReference>
<dbReference type="PANTHER" id="PTHR31495">
    <property type="entry name" value="PEROXYGENASE 3-RELATED"/>
    <property type="match status" value="1"/>
</dbReference>
<dbReference type="Pfam" id="PF05042">
    <property type="entry name" value="Caleosin"/>
    <property type="match status" value="1"/>
</dbReference>
<feature type="chain" id="PRO_0000415561" description="Peroxygenase">
    <location>
        <begin position="1"/>
        <end position="244"/>
    </location>
</feature>
<feature type="domain" description="EF-hand">
    <location>
        <begin position="64"/>
        <end position="99"/>
    </location>
</feature>
<feature type="region of interest" description="Disordered" evidence="3">
    <location>
        <begin position="1"/>
        <end position="21"/>
    </location>
</feature>
<feature type="short sequence motif" description="Proline-knot">
    <location>
        <begin position="120"/>
        <end position="129"/>
    </location>
</feature>
<feature type="binding site" description="axial binding residue" evidence="1">
    <location>
        <position position="72"/>
    </location>
    <ligand>
        <name>heme</name>
        <dbReference type="ChEBI" id="CHEBI:30413"/>
    </ligand>
    <ligandPart>
        <name>Fe</name>
        <dbReference type="ChEBI" id="CHEBI:18248"/>
    </ligandPart>
</feature>
<feature type="binding site" evidence="2">
    <location>
        <position position="77"/>
    </location>
    <ligand>
        <name>Ca(2+)</name>
        <dbReference type="ChEBI" id="CHEBI:29108"/>
    </ligand>
</feature>
<feature type="binding site" evidence="2">
    <location>
        <position position="79"/>
    </location>
    <ligand>
        <name>Ca(2+)</name>
        <dbReference type="ChEBI" id="CHEBI:29108"/>
    </ligand>
</feature>
<feature type="binding site" evidence="2">
    <location>
        <position position="81"/>
    </location>
    <ligand>
        <name>Ca(2+)</name>
        <dbReference type="ChEBI" id="CHEBI:29108"/>
    </ligand>
</feature>
<feature type="binding site" evidence="2">
    <location>
        <position position="88"/>
    </location>
    <ligand>
        <name>Ca(2+)</name>
        <dbReference type="ChEBI" id="CHEBI:29108"/>
    </ligand>
</feature>
<reference key="1">
    <citation type="journal article" date="2002" name="Nature">
        <title>Sequence and analysis of rice chromosome 4.</title>
        <authorList>
            <person name="Feng Q."/>
            <person name="Zhang Y."/>
            <person name="Hao P."/>
            <person name="Wang S."/>
            <person name="Fu G."/>
            <person name="Huang Y."/>
            <person name="Li Y."/>
            <person name="Zhu J."/>
            <person name="Liu Y."/>
            <person name="Hu X."/>
            <person name="Jia P."/>
            <person name="Zhang Y."/>
            <person name="Zhao Q."/>
            <person name="Ying K."/>
            <person name="Yu S."/>
            <person name="Tang Y."/>
            <person name="Weng Q."/>
            <person name="Zhang L."/>
            <person name="Lu Y."/>
            <person name="Mu J."/>
            <person name="Lu Y."/>
            <person name="Zhang L.S."/>
            <person name="Yu Z."/>
            <person name="Fan D."/>
            <person name="Liu X."/>
            <person name="Lu T."/>
            <person name="Li C."/>
            <person name="Wu Y."/>
            <person name="Sun T."/>
            <person name="Lei H."/>
            <person name="Li T."/>
            <person name="Hu H."/>
            <person name="Guan J."/>
            <person name="Wu M."/>
            <person name="Zhang R."/>
            <person name="Zhou B."/>
            <person name="Chen Z."/>
            <person name="Chen L."/>
            <person name="Jin Z."/>
            <person name="Wang R."/>
            <person name="Yin H."/>
            <person name="Cai Z."/>
            <person name="Ren S."/>
            <person name="Lv G."/>
            <person name="Gu W."/>
            <person name="Zhu G."/>
            <person name="Tu Y."/>
            <person name="Jia J."/>
            <person name="Zhang Y."/>
            <person name="Chen J."/>
            <person name="Kang H."/>
            <person name="Chen X."/>
            <person name="Shao C."/>
            <person name="Sun Y."/>
            <person name="Hu Q."/>
            <person name="Zhang X."/>
            <person name="Zhang W."/>
            <person name="Wang L."/>
            <person name="Ding C."/>
            <person name="Sheng H."/>
            <person name="Gu J."/>
            <person name="Chen S."/>
            <person name="Ni L."/>
            <person name="Zhu F."/>
            <person name="Chen W."/>
            <person name="Lan L."/>
            <person name="Lai Y."/>
            <person name="Cheng Z."/>
            <person name="Gu M."/>
            <person name="Jiang J."/>
            <person name="Li J."/>
            <person name="Hong G."/>
            <person name="Xue Y."/>
            <person name="Han B."/>
        </authorList>
    </citation>
    <scope>NUCLEOTIDE SEQUENCE [LARGE SCALE GENOMIC DNA]</scope>
    <source>
        <strain>cv. Nipponbare</strain>
    </source>
</reference>
<reference key="2">
    <citation type="journal article" date="2005" name="Nature">
        <title>The map-based sequence of the rice genome.</title>
        <authorList>
            <consortium name="International rice genome sequencing project (IRGSP)"/>
        </authorList>
    </citation>
    <scope>NUCLEOTIDE SEQUENCE [LARGE SCALE GENOMIC DNA]</scope>
    <source>
        <strain>cv. Nipponbare</strain>
    </source>
</reference>
<reference key="3">
    <citation type="journal article" date="2008" name="Nucleic Acids Res.">
        <title>The rice annotation project database (RAP-DB): 2008 update.</title>
        <authorList>
            <consortium name="The rice annotation project (RAP)"/>
        </authorList>
    </citation>
    <scope>GENOME REANNOTATION</scope>
    <source>
        <strain>cv. Nipponbare</strain>
    </source>
</reference>
<reference key="4">
    <citation type="journal article" date="2013" name="Rice">
        <title>Improvement of the Oryza sativa Nipponbare reference genome using next generation sequence and optical map data.</title>
        <authorList>
            <person name="Kawahara Y."/>
            <person name="de la Bastide M."/>
            <person name="Hamilton J.P."/>
            <person name="Kanamori H."/>
            <person name="McCombie W.R."/>
            <person name="Ouyang S."/>
            <person name="Schwartz D.C."/>
            <person name="Tanaka T."/>
            <person name="Wu J."/>
            <person name="Zhou S."/>
            <person name="Childs K.L."/>
            <person name="Davidson R.M."/>
            <person name="Lin H."/>
            <person name="Quesada-Ocampo L."/>
            <person name="Vaillancourt B."/>
            <person name="Sakai H."/>
            <person name="Lee S.S."/>
            <person name="Kim J."/>
            <person name="Numa H."/>
            <person name="Itoh T."/>
            <person name="Buell C.R."/>
            <person name="Matsumoto T."/>
        </authorList>
    </citation>
    <scope>GENOME REANNOTATION</scope>
    <source>
        <strain>cv. Nipponbare</strain>
    </source>
</reference>
<reference key="5">
    <citation type="journal article" date="2005" name="PLoS Biol.">
        <title>The genomes of Oryza sativa: a history of duplications.</title>
        <authorList>
            <person name="Yu J."/>
            <person name="Wang J."/>
            <person name="Lin W."/>
            <person name="Li S."/>
            <person name="Li H."/>
            <person name="Zhou J."/>
            <person name="Ni P."/>
            <person name="Dong W."/>
            <person name="Hu S."/>
            <person name="Zeng C."/>
            <person name="Zhang J."/>
            <person name="Zhang Y."/>
            <person name="Li R."/>
            <person name="Xu Z."/>
            <person name="Li S."/>
            <person name="Li X."/>
            <person name="Zheng H."/>
            <person name="Cong L."/>
            <person name="Lin L."/>
            <person name="Yin J."/>
            <person name="Geng J."/>
            <person name="Li G."/>
            <person name="Shi J."/>
            <person name="Liu J."/>
            <person name="Lv H."/>
            <person name="Li J."/>
            <person name="Wang J."/>
            <person name="Deng Y."/>
            <person name="Ran L."/>
            <person name="Shi X."/>
            <person name="Wang X."/>
            <person name="Wu Q."/>
            <person name="Li C."/>
            <person name="Ren X."/>
            <person name="Wang J."/>
            <person name="Wang X."/>
            <person name="Li D."/>
            <person name="Liu D."/>
            <person name="Zhang X."/>
            <person name="Ji Z."/>
            <person name="Zhao W."/>
            <person name="Sun Y."/>
            <person name="Zhang Z."/>
            <person name="Bao J."/>
            <person name="Han Y."/>
            <person name="Dong L."/>
            <person name="Ji J."/>
            <person name="Chen P."/>
            <person name="Wu S."/>
            <person name="Liu J."/>
            <person name="Xiao Y."/>
            <person name="Bu D."/>
            <person name="Tan J."/>
            <person name="Yang L."/>
            <person name="Ye C."/>
            <person name="Zhang J."/>
            <person name="Xu J."/>
            <person name="Zhou Y."/>
            <person name="Yu Y."/>
            <person name="Zhang B."/>
            <person name="Zhuang S."/>
            <person name="Wei H."/>
            <person name="Liu B."/>
            <person name="Lei M."/>
            <person name="Yu H."/>
            <person name="Li Y."/>
            <person name="Xu H."/>
            <person name="Wei S."/>
            <person name="He X."/>
            <person name="Fang L."/>
            <person name="Zhang Z."/>
            <person name="Zhang Y."/>
            <person name="Huang X."/>
            <person name="Su Z."/>
            <person name="Tong W."/>
            <person name="Li J."/>
            <person name="Tong Z."/>
            <person name="Li S."/>
            <person name="Ye J."/>
            <person name="Wang L."/>
            <person name="Fang L."/>
            <person name="Lei T."/>
            <person name="Chen C.-S."/>
            <person name="Chen H.-C."/>
            <person name="Xu Z."/>
            <person name="Li H."/>
            <person name="Huang H."/>
            <person name="Zhang F."/>
            <person name="Xu H."/>
            <person name="Li N."/>
            <person name="Zhao C."/>
            <person name="Li S."/>
            <person name="Dong L."/>
            <person name="Huang Y."/>
            <person name="Li L."/>
            <person name="Xi Y."/>
            <person name="Qi Q."/>
            <person name="Li W."/>
            <person name="Zhang B."/>
            <person name="Hu W."/>
            <person name="Zhang Y."/>
            <person name="Tian X."/>
            <person name="Jiao Y."/>
            <person name="Liang X."/>
            <person name="Jin J."/>
            <person name="Gao L."/>
            <person name="Zheng W."/>
            <person name="Hao B."/>
            <person name="Liu S.-M."/>
            <person name="Wang W."/>
            <person name="Yuan L."/>
            <person name="Cao M."/>
            <person name="McDermott J."/>
            <person name="Samudrala R."/>
            <person name="Wang J."/>
            <person name="Wong G.K.-S."/>
            <person name="Yang H."/>
        </authorList>
    </citation>
    <scope>NUCLEOTIDE SEQUENCE [LARGE SCALE GENOMIC DNA]</scope>
    <source>
        <strain>cv. Nipponbare</strain>
        <tissue>Root</tissue>
    </source>
</reference>
<reference key="6">
    <citation type="submission" date="2006-10" db="EMBL/GenBank/DDBJ databases">
        <title>Oryza sativa full length cDNA.</title>
        <authorList>
            <consortium name="The rice full-length cDNA consortium"/>
        </authorList>
    </citation>
    <scope>NUCLEOTIDE SEQUENCE [LARGE SCALE MRNA]</scope>
    <source>
        <strain>cv. Nipponbare</strain>
    </source>
</reference>
<organism>
    <name type="scientific">Oryza sativa subsp. japonica</name>
    <name type="common">Rice</name>
    <dbReference type="NCBI Taxonomy" id="39947"/>
    <lineage>
        <taxon>Eukaryota</taxon>
        <taxon>Viridiplantae</taxon>
        <taxon>Streptophyta</taxon>
        <taxon>Embryophyta</taxon>
        <taxon>Tracheophyta</taxon>
        <taxon>Spermatophyta</taxon>
        <taxon>Magnoliopsida</taxon>
        <taxon>Liliopsida</taxon>
        <taxon>Poales</taxon>
        <taxon>Poaceae</taxon>
        <taxon>BOP clade</taxon>
        <taxon>Oryzoideae</taxon>
        <taxon>Oryzeae</taxon>
        <taxon>Oryzinae</taxon>
        <taxon>Oryza</taxon>
        <taxon>Oryza sativa</taxon>
    </lineage>
</organism>
<proteinExistence type="evidence at transcript level"/>
<keyword id="KW-0106">Calcium</keyword>
<keyword id="KW-0256">Endoplasmic reticulum</keyword>
<keyword id="KW-0349">Heme</keyword>
<keyword id="KW-0408">Iron</keyword>
<keyword id="KW-0551">Lipid droplet</keyword>
<keyword id="KW-0472">Membrane</keyword>
<keyword id="KW-0479">Metal-binding</keyword>
<keyword id="KW-0492">Microsome</keyword>
<keyword id="KW-0560">Oxidoreductase</keyword>
<keyword id="KW-1185">Reference proteome</keyword>
<accession>Q7FAX1</accession>
<accession>A0A0P0WCG8</accession>
<sequence length="244" mass="27414">MAEEAASKAAPTDALSSVAAEAPVTRERPVRADLEVQIPKPYLARALVAPDVYHPEGTEGRDHRQMSVLQQHVAFFDLDGDGIVYPWETYGGLRELGFNVIVSFFLAIAINVGLSYPTLPSWIPSLLFPIHIKNIHRAKHGSDSSTYDNEGRFMPVNFESIFSKNARTAPDKLTFGDIWRMTEGQRVALDLLGRIASKGEWILLYVLAKDEEGFLRKEAVRRCFDGSLFESIAQQRREAHEKQK</sequence>
<protein>
    <recommendedName>
        <fullName>Peroxygenase</fullName>
        <ecNumber>1.11.2.3</ecNumber>
    </recommendedName>
</protein>
<evidence type="ECO:0000250" key="1"/>
<evidence type="ECO:0000255" key="2"/>
<evidence type="ECO:0000256" key="3">
    <source>
        <dbReference type="SAM" id="MobiDB-lite"/>
    </source>
</evidence>
<evidence type="ECO:0000305" key="4"/>
<name>PXG_ORYSJ</name>